<evidence type="ECO:0000255" key="1">
    <source>
        <dbReference type="HAMAP-Rule" id="MF_01080"/>
    </source>
</evidence>
<organism>
    <name type="scientific">Deinococcus radiodurans (strain ATCC 13939 / DSM 20539 / JCM 16871 / CCUG 27074 / LMG 4051 / NBRC 15346 / NCIMB 9279 / VKM B-1422 / R1)</name>
    <dbReference type="NCBI Taxonomy" id="243230"/>
    <lineage>
        <taxon>Bacteria</taxon>
        <taxon>Thermotogati</taxon>
        <taxon>Deinococcota</taxon>
        <taxon>Deinococci</taxon>
        <taxon>Deinococcales</taxon>
        <taxon>Deinococcaceae</taxon>
        <taxon>Deinococcus</taxon>
    </lineage>
</organism>
<gene>
    <name evidence="1" type="primary">truB</name>
    <name type="ordered locus">DR_1323</name>
</gene>
<reference key="1">
    <citation type="journal article" date="1999" name="Science">
        <title>Genome sequence of the radioresistant bacterium Deinococcus radiodurans R1.</title>
        <authorList>
            <person name="White O."/>
            <person name="Eisen J.A."/>
            <person name="Heidelberg J.F."/>
            <person name="Hickey E.K."/>
            <person name="Peterson J.D."/>
            <person name="Dodson R.J."/>
            <person name="Haft D.H."/>
            <person name="Gwinn M.L."/>
            <person name="Nelson W.C."/>
            <person name="Richardson D.L."/>
            <person name="Moffat K.S."/>
            <person name="Qin H."/>
            <person name="Jiang L."/>
            <person name="Pamphile W."/>
            <person name="Crosby M."/>
            <person name="Shen M."/>
            <person name="Vamathevan J.J."/>
            <person name="Lam P."/>
            <person name="McDonald L.A."/>
            <person name="Utterback T.R."/>
            <person name="Zalewski C."/>
            <person name="Makarova K.S."/>
            <person name="Aravind L."/>
            <person name="Daly M.J."/>
            <person name="Minton K.W."/>
            <person name="Fleischmann R.D."/>
            <person name="Ketchum K.A."/>
            <person name="Nelson K.E."/>
            <person name="Salzberg S.L."/>
            <person name="Smith H.O."/>
            <person name="Venter J.C."/>
            <person name="Fraser C.M."/>
        </authorList>
    </citation>
    <scope>NUCLEOTIDE SEQUENCE [LARGE SCALE GENOMIC DNA]</scope>
    <source>
        <strain>ATCC 13939 / DSM 20539 / JCM 16871 / CCUG 27074 / LMG 4051 / NBRC 15346 / NCIMB 9279 / VKM B-1422 / R1</strain>
    </source>
</reference>
<comment type="function">
    <text evidence="1">Responsible for synthesis of pseudouridine from uracil-55 in the psi GC loop of transfer RNAs.</text>
</comment>
<comment type="catalytic activity">
    <reaction evidence="1">
        <text>uridine(55) in tRNA = pseudouridine(55) in tRNA</text>
        <dbReference type="Rhea" id="RHEA:42532"/>
        <dbReference type="Rhea" id="RHEA-COMP:10101"/>
        <dbReference type="Rhea" id="RHEA-COMP:10102"/>
        <dbReference type="ChEBI" id="CHEBI:65314"/>
        <dbReference type="ChEBI" id="CHEBI:65315"/>
        <dbReference type="EC" id="5.4.99.25"/>
    </reaction>
</comment>
<comment type="similarity">
    <text evidence="1">Belongs to the pseudouridine synthase TruB family. Type 1 subfamily.</text>
</comment>
<protein>
    <recommendedName>
        <fullName evidence="1">tRNA pseudouridine synthase B</fullName>
        <ecNumber evidence="1">5.4.99.25</ecNumber>
    </recommendedName>
    <alternativeName>
        <fullName evidence="1">tRNA pseudouridine(55) synthase</fullName>
        <shortName evidence="1">Psi55 synthase</shortName>
    </alternativeName>
    <alternativeName>
        <fullName evidence="1">tRNA pseudouridylate synthase</fullName>
    </alternativeName>
    <alternativeName>
        <fullName evidence="1">tRNA-uridine isomerase</fullName>
    </alternativeName>
</protein>
<sequence>MPVIAADKPLHLTSHDVVNRARRALGTKRVGHTGTLDPLATGVVVLCVDDSTKLVQFMEHDTKEYLAWVSLGAGTPTLDAEGPIEQQAEVPPLDEDHLREVLKGFLGPQQQIPPQYSAIQIGGQRAYAVARAGGQLDLPARDVEIHELELIGMFPSVQAAPRTFDPQSWTPAAAGLTFTLPEPLGEFPTLLLRAHVGSGTYLRSLARDLGAALGVPAHLGGLVRTRAGRYSLRDAVSLENLTEAPTIPDLDALDFPRIEADERLARELRQGKRPAHPQRGRAVVTLGGELVAVVDGDGEHLKVVRAWA</sequence>
<name>TRUB_DEIRA</name>
<proteinExistence type="inferred from homology"/>
<keyword id="KW-0413">Isomerase</keyword>
<keyword id="KW-1185">Reference proteome</keyword>
<keyword id="KW-0819">tRNA processing</keyword>
<feature type="chain" id="PRO_0000121827" description="tRNA pseudouridine synthase B">
    <location>
        <begin position="1"/>
        <end position="308"/>
    </location>
</feature>
<feature type="active site" description="Nucleophile" evidence="1">
    <location>
        <position position="37"/>
    </location>
</feature>
<accession>Q9RUQ9</accession>
<dbReference type="EC" id="5.4.99.25" evidence="1"/>
<dbReference type="EMBL" id="AE000513">
    <property type="protein sequence ID" value="AAF10895.1"/>
    <property type="molecule type" value="Genomic_DNA"/>
</dbReference>
<dbReference type="PIR" id="F75408">
    <property type="entry name" value="F75408"/>
</dbReference>
<dbReference type="RefSeq" id="NP_295047.1">
    <property type="nucleotide sequence ID" value="NC_001263.1"/>
</dbReference>
<dbReference type="RefSeq" id="WP_010887965.1">
    <property type="nucleotide sequence ID" value="NC_001263.1"/>
</dbReference>
<dbReference type="SMR" id="Q9RUQ9"/>
<dbReference type="FunCoup" id="Q9RUQ9">
    <property type="interactions" value="370"/>
</dbReference>
<dbReference type="STRING" id="243230.DR_1323"/>
<dbReference type="PaxDb" id="243230-DR_1323"/>
<dbReference type="EnsemblBacteria" id="AAF10895">
    <property type="protein sequence ID" value="AAF10895"/>
    <property type="gene ID" value="DR_1323"/>
</dbReference>
<dbReference type="GeneID" id="69517571"/>
<dbReference type="KEGG" id="dra:DR_1323"/>
<dbReference type="PATRIC" id="fig|243230.17.peg.1518"/>
<dbReference type="eggNOG" id="COG0130">
    <property type="taxonomic scope" value="Bacteria"/>
</dbReference>
<dbReference type="HOGENOM" id="CLU_032087_0_2_0"/>
<dbReference type="InParanoid" id="Q9RUQ9"/>
<dbReference type="OrthoDB" id="9802309at2"/>
<dbReference type="Proteomes" id="UP000002524">
    <property type="component" value="Chromosome 1"/>
</dbReference>
<dbReference type="GO" id="GO:0009982">
    <property type="term" value="F:pseudouridine synthase activity"/>
    <property type="evidence" value="ECO:0000318"/>
    <property type="project" value="GO_Central"/>
</dbReference>
<dbReference type="GO" id="GO:0003723">
    <property type="term" value="F:RNA binding"/>
    <property type="evidence" value="ECO:0007669"/>
    <property type="project" value="InterPro"/>
</dbReference>
<dbReference type="GO" id="GO:0160148">
    <property type="term" value="F:tRNA pseudouridine(55) synthase activity"/>
    <property type="evidence" value="ECO:0007669"/>
    <property type="project" value="UniProtKB-EC"/>
</dbReference>
<dbReference type="GO" id="GO:1990481">
    <property type="term" value="P:mRNA pseudouridine synthesis"/>
    <property type="evidence" value="ECO:0000318"/>
    <property type="project" value="GO_Central"/>
</dbReference>
<dbReference type="GO" id="GO:0006400">
    <property type="term" value="P:tRNA modification"/>
    <property type="evidence" value="ECO:0000318"/>
    <property type="project" value="GO_Central"/>
</dbReference>
<dbReference type="GO" id="GO:0031119">
    <property type="term" value="P:tRNA pseudouridine synthesis"/>
    <property type="evidence" value="ECO:0007669"/>
    <property type="project" value="UniProtKB-UniRule"/>
</dbReference>
<dbReference type="CDD" id="cd02573">
    <property type="entry name" value="PseudoU_synth_EcTruB"/>
    <property type="match status" value="1"/>
</dbReference>
<dbReference type="Gene3D" id="3.30.2350.10">
    <property type="entry name" value="Pseudouridine synthase"/>
    <property type="match status" value="1"/>
</dbReference>
<dbReference type="HAMAP" id="MF_01080">
    <property type="entry name" value="TruB_bact"/>
    <property type="match status" value="1"/>
</dbReference>
<dbReference type="InterPro" id="IPR020103">
    <property type="entry name" value="PsdUridine_synth_cat_dom_sf"/>
</dbReference>
<dbReference type="InterPro" id="IPR002501">
    <property type="entry name" value="PsdUridine_synth_N"/>
</dbReference>
<dbReference type="InterPro" id="IPR014780">
    <property type="entry name" value="tRNA_psdUridine_synth_TruB"/>
</dbReference>
<dbReference type="InterPro" id="IPR032819">
    <property type="entry name" value="TruB_C"/>
</dbReference>
<dbReference type="NCBIfam" id="TIGR00431">
    <property type="entry name" value="TruB"/>
    <property type="match status" value="1"/>
</dbReference>
<dbReference type="PANTHER" id="PTHR13767:SF2">
    <property type="entry name" value="PSEUDOURIDYLATE SYNTHASE TRUB1"/>
    <property type="match status" value="1"/>
</dbReference>
<dbReference type="PANTHER" id="PTHR13767">
    <property type="entry name" value="TRNA-PSEUDOURIDINE SYNTHASE"/>
    <property type="match status" value="1"/>
</dbReference>
<dbReference type="Pfam" id="PF16198">
    <property type="entry name" value="TruB_C_2"/>
    <property type="match status" value="1"/>
</dbReference>
<dbReference type="Pfam" id="PF01509">
    <property type="entry name" value="TruB_N"/>
    <property type="match status" value="1"/>
</dbReference>
<dbReference type="SUPFAM" id="SSF55120">
    <property type="entry name" value="Pseudouridine synthase"/>
    <property type="match status" value="1"/>
</dbReference>